<comment type="catalytic activity">
    <reaction>
        <text>N(6)-[(R)-dihydrolipoyl]-L-lysyl-[protein] + acetyl-CoA = N(6)-[(R)-S(8)-acetyldihydrolipoyl]-L-lysyl-[protein] + CoA</text>
        <dbReference type="Rhea" id="RHEA:17017"/>
        <dbReference type="Rhea" id="RHEA-COMP:10475"/>
        <dbReference type="Rhea" id="RHEA-COMP:10478"/>
        <dbReference type="ChEBI" id="CHEBI:57287"/>
        <dbReference type="ChEBI" id="CHEBI:57288"/>
        <dbReference type="ChEBI" id="CHEBI:83100"/>
        <dbReference type="ChEBI" id="CHEBI:83111"/>
        <dbReference type="EC" id="2.3.1.12"/>
    </reaction>
</comment>
<comment type="cofactor">
    <cofactor evidence="1">
        <name>(R)-lipoate</name>
        <dbReference type="ChEBI" id="CHEBI:83088"/>
    </cofactor>
    <text evidence="1">Binds 1 lipoyl cofactor covalently.</text>
</comment>
<comment type="pathway">
    <text>Ketone degradation; acetoin degradation.</text>
</comment>
<reference key="1">
    <citation type="journal article" date="1994" name="FEMS Microbiol. Lett.">
        <title>Molecular characterization of the Pseudomonas putida 2,3-butanediol catabolic pathway.</title>
        <authorList>
            <person name="Huang M."/>
            <person name="Oppermann F.B."/>
            <person name="Steinbuchel A."/>
        </authorList>
    </citation>
    <scope>NUCLEOTIDE SEQUENCE [GENOMIC DNA]</scope>
    <source>
        <strain>G2</strain>
    </source>
</reference>
<dbReference type="EC" id="2.3.1.12"/>
<dbReference type="EMBL" id="L35343">
    <property type="protein sequence ID" value="AAB58981.1"/>
    <property type="molecule type" value="Genomic_DNA"/>
</dbReference>
<dbReference type="SMR" id="Q59695"/>
<dbReference type="ESTHER" id="psepu-acoc">
    <property type="family name" value="AcoC_BiotinLipoyl-ABH"/>
</dbReference>
<dbReference type="UniPathway" id="UPA00040"/>
<dbReference type="GO" id="GO:0016020">
    <property type="term" value="C:membrane"/>
    <property type="evidence" value="ECO:0007669"/>
    <property type="project" value="TreeGrafter"/>
</dbReference>
<dbReference type="GO" id="GO:0004742">
    <property type="term" value="F:dihydrolipoyllysine-residue acetyltransferase activity"/>
    <property type="evidence" value="ECO:0007669"/>
    <property type="project" value="UniProtKB-EC"/>
</dbReference>
<dbReference type="GO" id="GO:0045150">
    <property type="term" value="P:acetoin catabolic process"/>
    <property type="evidence" value="ECO:0007669"/>
    <property type="project" value="UniProtKB-UniPathway"/>
</dbReference>
<dbReference type="CDD" id="cd06849">
    <property type="entry name" value="lipoyl_domain"/>
    <property type="match status" value="1"/>
</dbReference>
<dbReference type="Gene3D" id="2.40.50.100">
    <property type="match status" value="1"/>
</dbReference>
<dbReference type="Gene3D" id="3.40.50.1820">
    <property type="entry name" value="alpha/beta hydrolase"/>
    <property type="match status" value="1"/>
</dbReference>
<dbReference type="InterPro" id="IPR003016">
    <property type="entry name" value="2-oxoA_DH_lipoyl-BS"/>
</dbReference>
<dbReference type="InterPro" id="IPR000073">
    <property type="entry name" value="AB_hydrolase_1"/>
</dbReference>
<dbReference type="InterPro" id="IPR029058">
    <property type="entry name" value="AB_hydrolase_fold"/>
</dbReference>
<dbReference type="InterPro" id="IPR050266">
    <property type="entry name" value="AB_hydrolase_sf"/>
</dbReference>
<dbReference type="InterPro" id="IPR000089">
    <property type="entry name" value="Biotin_lipoyl"/>
</dbReference>
<dbReference type="InterPro" id="IPR011053">
    <property type="entry name" value="Single_hybrid_motif"/>
</dbReference>
<dbReference type="NCBIfam" id="NF011457">
    <property type="entry name" value="PRK14875.1"/>
    <property type="match status" value="1"/>
</dbReference>
<dbReference type="PANTHER" id="PTHR43798:SF33">
    <property type="entry name" value="HYDROLASE, PUTATIVE (AFU_ORTHOLOGUE AFUA_2G14860)-RELATED"/>
    <property type="match status" value="1"/>
</dbReference>
<dbReference type="PANTHER" id="PTHR43798">
    <property type="entry name" value="MONOACYLGLYCEROL LIPASE"/>
    <property type="match status" value="1"/>
</dbReference>
<dbReference type="Pfam" id="PF00561">
    <property type="entry name" value="Abhydrolase_1"/>
    <property type="match status" value="1"/>
</dbReference>
<dbReference type="Pfam" id="PF00364">
    <property type="entry name" value="Biotin_lipoyl"/>
    <property type="match status" value="1"/>
</dbReference>
<dbReference type="PRINTS" id="PR00111">
    <property type="entry name" value="ABHYDROLASE"/>
</dbReference>
<dbReference type="SUPFAM" id="SSF53474">
    <property type="entry name" value="alpha/beta-Hydrolases"/>
    <property type="match status" value="1"/>
</dbReference>
<dbReference type="SUPFAM" id="SSF51230">
    <property type="entry name" value="Single hybrid motif"/>
    <property type="match status" value="1"/>
</dbReference>
<dbReference type="PROSITE" id="PS50968">
    <property type="entry name" value="BIOTINYL_LIPOYL"/>
    <property type="match status" value="1"/>
</dbReference>
<dbReference type="PROSITE" id="PS00189">
    <property type="entry name" value="LIPOYL"/>
    <property type="match status" value="1"/>
</dbReference>
<evidence type="ECO:0000250" key="1"/>
<evidence type="ECO:0000255" key="2"/>
<evidence type="ECO:0000255" key="3">
    <source>
        <dbReference type="PROSITE-ProRule" id="PRU01066"/>
    </source>
</evidence>
<feature type="chain" id="PRO_0000162305" description="Dihydrolipoyllysine-residue acetyltransferase component of acetoin cleaving system">
    <location>
        <begin position="1"/>
        <end position="370"/>
    </location>
</feature>
<feature type="domain" description="Lipoyl-binding" evidence="3">
    <location>
        <begin position="4"/>
        <end position="79"/>
    </location>
</feature>
<feature type="domain" description="AB hydrolase-1" evidence="2">
    <location>
        <begin position="135"/>
        <end position="355"/>
    </location>
</feature>
<feature type="modified residue" description="N6-lipoyllysine" evidence="1 3">
    <location>
        <position position="45"/>
    </location>
</feature>
<name>ACOC_PSEPU</name>
<keyword id="KW-0006">Acetoin catabolism</keyword>
<keyword id="KW-0012">Acyltransferase</keyword>
<keyword id="KW-0450">Lipoyl</keyword>
<keyword id="KW-0808">Transferase</keyword>
<gene>
    <name type="primary">acoC</name>
</gene>
<protein>
    <recommendedName>
        <fullName>Dihydrolipoyllysine-residue acetyltransferase component of acetoin cleaving system</fullName>
        <ecNumber>2.3.1.12</ecNumber>
    </recommendedName>
    <alternativeName>
        <fullName>Acetoin dehydrogenase E2 component</fullName>
    </alternativeName>
    <alternativeName>
        <fullName>Dihydrolipoamide acetyltransferase component of acetoin cleaving system</fullName>
    </alternativeName>
</protein>
<sequence>MSQIHTLTMPKWGLSMTEGRVDAWLKQEGDEINKGDEVLDVETDKISSSVEAPFSGVLRRQVAKPDETLPVGALLAVVVEGEAEESEIDAVVQRFQAEFVAEGGADQAQGPAPQKAEVGGRLLRWFELGGEGGTPLVLVHGFGGDLNNWLFNHPALAAERRVIALDLPGHGESAKALQRGDLDELSETVLALLDHLDIAKAHLAGHSMGGAVSLNVAGLAPQRVASLSLIASAGLGEAINGQYLQGFVAAANRNALKPQMVQLFADPALVTRQMLEDMLKFKRLEGVDEALRQLALAIADGDRQRHDLRSVLGQHPALVVWGGKDAIIPASHARKGPEAEVLVLPEAGHMVQMEAAEQVNQQMLAFLRKH</sequence>
<organism>
    <name type="scientific">Pseudomonas putida</name>
    <name type="common">Arthrobacter siderocapsulatus</name>
    <dbReference type="NCBI Taxonomy" id="303"/>
    <lineage>
        <taxon>Bacteria</taxon>
        <taxon>Pseudomonadati</taxon>
        <taxon>Pseudomonadota</taxon>
        <taxon>Gammaproteobacteria</taxon>
        <taxon>Pseudomonadales</taxon>
        <taxon>Pseudomonadaceae</taxon>
        <taxon>Pseudomonas</taxon>
    </lineage>
</organism>
<proteinExistence type="inferred from homology"/>
<accession>Q59695</accession>